<protein>
    <recommendedName>
        <fullName>Protein Turandot X1/X2</fullName>
    </recommendedName>
</protein>
<accession>B4II52</accession>
<name>TOTX_DROSE</name>
<proteinExistence type="inferred from homology"/>
<feature type="signal peptide" evidence="2">
    <location>
        <begin position="1"/>
        <end position="22"/>
    </location>
</feature>
<feature type="chain" id="PRO_0000355003" description="Protein Turandot X1/X2">
    <location>
        <begin position="23"/>
        <end position="150"/>
    </location>
</feature>
<feature type="region of interest" description="Disordered" evidence="3">
    <location>
        <begin position="127"/>
        <end position="150"/>
    </location>
</feature>
<feature type="compositionally biased region" description="Polar residues" evidence="3">
    <location>
        <begin position="132"/>
        <end position="150"/>
    </location>
</feature>
<organism>
    <name type="scientific">Drosophila sechellia</name>
    <name type="common">Fruit fly</name>
    <dbReference type="NCBI Taxonomy" id="7238"/>
    <lineage>
        <taxon>Eukaryota</taxon>
        <taxon>Metazoa</taxon>
        <taxon>Ecdysozoa</taxon>
        <taxon>Arthropoda</taxon>
        <taxon>Hexapoda</taxon>
        <taxon>Insecta</taxon>
        <taxon>Pterygota</taxon>
        <taxon>Neoptera</taxon>
        <taxon>Endopterygota</taxon>
        <taxon>Diptera</taxon>
        <taxon>Brachycera</taxon>
        <taxon>Muscomorpha</taxon>
        <taxon>Ephydroidea</taxon>
        <taxon>Drosophilidae</taxon>
        <taxon>Drosophila</taxon>
        <taxon>Sophophora</taxon>
    </lineage>
</organism>
<evidence type="ECO:0000250" key="1">
    <source>
        <dbReference type="UniProtKB" id="Q8IN41"/>
    </source>
</evidence>
<evidence type="ECO:0000255" key="2"/>
<evidence type="ECO:0000256" key="3">
    <source>
        <dbReference type="SAM" id="MobiDB-lite"/>
    </source>
</evidence>
<evidence type="ECO:0000312" key="4">
    <source>
        <dbReference type="EMBL" id="EDW49596.1"/>
    </source>
</evidence>
<comment type="function">
    <text evidence="1">A humoral factor that may play a role in stress tolerance.</text>
</comment>
<comment type="subcellular location">
    <subcellularLocation>
        <location evidence="1">Secreted</location>
    </subcellularLocation>
</comment>
<comment type="similarity">
    <text evidence="2">Belongs to the Turandot family.</text>
</comment>
<keyword id="KW-0391">Immunity</keyword>
<keyword id="KW-0399">Innate immunity</keyword>
<keyword id="KW-1185">Reference proteome</keyword>
<keyword id="KW-0964">Secreted</keyword>
<keyword id="KW-0732">Signal</keyword>
<reference evidence="4" key="1">
    <citation type="journal article" date="2007" name="Nature">
        <title>Evolution of genes and genomes on the Drosophila phylogeny.</title>
        <authorList>
            <consortium name="Drosophila 12 genomes consortium"/>
        </authorList>
    </citation>
    <scope>NUCLEOTIDE SEQUENCE [LARGE SCALE GENOMIC DNA] (GM15120 AND GM23148)</scope>
    <source>
        <strain evidence="4">Rob3c / Tucson 14021-0248.25</strain>
    </source>
</reference>
<dbReference type="EMBL" id="CH480842">
    <property type="protein sequence ID" value="EDW49596.1"/>
    <property type="molecule type" value="Genomic_DNA"/>
</dbReference>
<dbReference type="EMBL" id="CH480853">
    <property type="protein sequence ID" value="EDW51640.1"/>
    <property type="molecule type" value="Genomic_DNA"/>
</dbReference>
<dbReference type="RefSeq" id="XP_002044296.1">
    <property type="nucleotide sequence ID" value="XM_002044260.1"/>
</dbReference>
<dbReference type="STRING" id="7238.B4II52"/>
<dbReference type="EnsemblMetazoa" id="FBtr0198105">
    <property type="protein sequence ID" value="FBpp0196597"/>
    <property type="gene ID" value="FBgn0170040"/>
</dbReference>
<dbReference type="EnsemblMetazoa" id="FBtr0206133">
    <property type="protein sequence ID" value="FBpp0204625"/>
    <property type="gene ID" value="FBgn0178016"/>
</dbReference>
<dbReference type="EnsemblMetazoa" id="XM_002043376.2">
    <property type="protein sequence ID" value="XP_002043412.1"/>
    <property type="gene ID" value="LOC6619300"/>
</dbReference>
<dbReference type="GeneID" id="6619300"/>
<dbReference type="KEGG" id="dse:6619300"/>
<dbReference type="HOGENOM" id="CLU_1817777_0_0_1"/>
<dbReference type="OMA" id="QFERFIH"/>
<dbReference type="OrthoDB" id="49329at7215"/>
<dbReference type="PhylomeDB" id="B4II52"/>
<dbReference type="Proteomes" id="UP000001292">
    <property type="component" value="Unassembled WGS sequence"/>
</dbReference>
<dbReference type="GO" id="GO:0005615">
    <property type="term" value="C:extracellular space"/>
    <property type="evidence" value="ECO:0000250"/>
    <property type="project" value="UniProtKB"/>
</dbReference>
<dbReference type="GO" id="GO:0034605">
    <property type="term" value="P:cellular response to heat"/>
    <property type="evidence" value="ECO:0007669"/>
    <property type="project" value="EnsemblMetazoa"/>
</dbReference>
<dbReference type="GO" id="GO:0034599">
    <property type="term" value="P:cellular response to oxidative stress"/>
    <property type="evidence" value="ECO:0007669"/>
    <property type="project" value="EnsemblMetazoa"/>
</dbReference>
<dbReference type="GO" id="GO:0045087">
    <property type="term" value="P:innate immune response"/>
    <property type="evidence" value="ECO:0007669"/>
    <property type="project" value="UniProtKB-KW"/>
</dbReference>
<dbReference type="GO" id="GO:0009617">
    <property type="term" value="P:response to bacterium"/>
    <property type="evidence" value="ECO:0000250"/>
    <property type="project" value="UniProtKB"/>
</dbReference>
<dbReference type="GO" id="GO:0009408">
    <property type="term" value="P:response to heat"/>
    <property type="evidence" value="ECO:0000250"/>
    <property type="project" value="UniProtKB"/>
</dbReference>
<dbReference type="GO" id="GO:0006979">
    <property type="term" value="P:response to oxidative stress"/>
    <property type="evidence" value="ECO:0000250"/>
    <property type="project" value="UniProtKB"/>
</dbReference>
<dbReference type="InterPro" id="IPR010825">
    <property type="entry name" value="Turandot"/>
</dbReference>
<dbReference type="Pfam" id="PF07240">
    <property type="entry name" value="Turandot"/>
    <property type="match status" value="1"/>
</dbReference>
<sequence length="150" mass="17265">MRLYIGSLLICVLLGIVPFATANTNRSGYEEHRNYLLNIFHNPLVNDSIKEKNIPELIAFYQRYPTDIPLSDADRQQFERFIHDYREYREVLVDGVPPQGGSFGNIFGHFLGRVGTRYISSLFNKKREEGQSNHANSPTTSPSRIQKMTK</sequence>
<gene>
    <name evidence="1" type="primary">TotX1</name>
    <name type="ORF">GM15120</name>
</gene>
<gene>
    <name evidence="1" type="primary">TotX2</name>
    <name type="ORF">GM23148</name>
</gene>